<sequence>MSVKKQLERLSELGAYYHKNGWMPGTAGNLSIRIPEESGFWVSGSGLDKDLLNKRNFLYVDLESGKPVDSKNVKATKGLKPSAETSIHRAVYRALDEVGCGLHVHTLESNLICANTSKNEPIALFELPAIEILKAYGIWEENPKVYVPIIYNFPNVQDISDCLEKYLKEYRPHVPFCIIEKHGITVWGKDAVQANRNLEATDFILKYMTSWKSFSYSGEPRKLSVSDVLEQDRREIFSVEFPVYPATFY</sequence>
<reference key="1">
    <citation type="journal article" date="2004" name="J. Bacteriol.">
        <title>Comparative genomics of two Leptospira interrogans serovars reveals novel insights into physiology and pathogenesis.</title>
        <authorList>
            <person name="Nascimento A.L.T.O."/>
            <person name="Ko A.I."/>
            <person name="Martins E.A.L."/>
            <person name="Monteiro-Vitorello C.B."/>
            <person name="Ho P.L."/>
            <person name="Haake D.A."/>
            <person name="Verjovski-Almeida S."/>
            <person name="Hartskeerl R.A."/>
            <person name="Marques M.V."/>
            <person name="Oliveira M.C."/>
            <person name="Menck C.F.M."/>
            <person name="Leite L.C.C."/>
            <person name="Carrer H."/>
            <person name="Coutinho L.L."/>
            <person name="Degrave W.M."/>
            <person name="Dellagostin O.A."/>
            <person name="El-Dorry H."/>
            <person name="Ferro E.S."/>
            <person name="Ferro M.I.T."/>
            <person name="Furlan L.R."/>
            <person name="Gamberini M."/>
            <person name="Giglioti E.A."/>
            <person name="Goes-Neto A."/>
            <person name="Goldman G.H."/>
            <person name="Goldman M.H.S."/>
            <person name="Harakava R."/>
            <person name="Jeronimo S.M.B."/>
            <person name="Junqueira-de-Azevedo I.L.M."/>
            <person name="Kimura E.T."/>
            <person name="Kuramae E.E."/>
            <person name="Lemos E.G.M."/>
            <person name="Lemos M.V.F."/>
            <person name="Marino C.L."/>
            <person name="Nunes L.R."/>
            <person name="de Oliveira R.C."/>
            <person name="Pereira G.G."/>
            <person name="Reis M.S."/>
            <person name="Schriefer A."/>
            <person name="Siqueira W.J."/>
            <person name="Sommer P."/>
            <person name="Tsai S.M."/>
            <person name="Simpson A.J.G."/>
            <person name="Ferro J.A."/>
            <person name="Camargo L.E.A."/>
            <person name="Kitajima J.P."/>
            <person name="Setubal J.C."/>
            <person name="Van Sluys M.A."/>
        </authorList>
    </citation>
    <scope>NUCLEOTIDE SEQUENCE [LARGE SCALE GENOMIC DNA]</scope>
    <source>
        <strain>Fiocruz L1-130</strain>
    </source>
</reference>
<keyword id="KW-0028">Amino-acid biosynthesis</keyword>
<keyword id="KW-0456">Lyase</keyword>
<keyword id="KW-0479">Metal-binding</keyword>
<keyword id="KW-0486">Methionine biosynthesis</keyword>
<keyword id="KW-0862">Zinc</keyword>
<evidence type="ECO:0000255" key="1">
    <source>
        <dbReference type="HAMAP-Rule" id="MF_01677"/>
    </source>
</evidence>
<proteinExistence type="inferred from homology"/>
<name>MTNB_LEPIC</name>
<dbReference type="EC" id="4.2.1.109" evidence="1"/>
<dbReference type="EMBL" id="AE016824">
    <property type="protein sequence ID" value="AAS72252.1"/>
    <property type="molecule type" value="Genomic_DNA"/>
</dbReference>
<dbReference type="RefSeq" id="WP_000111953.1">
    <property type="nucleotide sequence ID" value="NC_005824.1"/>
</dbReference>
<dbReference type="SMR" id="Q75FG3"/>
<dbReference type="GeneID" id="61141424"/>
<dbReference type="KEGG" id="lic:LIC_20226"/>
<dbReference type="HOGENOM" id="CLU_006033_4_1_12"/>
<dbReference type="UniPathway" id="UPA00904">
    <property type="reaction ID" value="UER00875"/>
</dbReference>
<dbReference type="Proteomes" id="UP000007037">
    <property type="component" value="Chromosome II"/>
</dbReference>
<dbReference type="GO" id="GO:0005737">
    <property type="term" value="C:cytoplasm"/>
    <property type="evidence" value="ECO:0007669"/>
    <property type="project" value="InterPro"/>
</dbReference>
<dbReference type="GO" id="GO:0046570">
    <property type="term" value="F:methylthioribulose 1-phosphate dehydratase activity"/>
    <property type="evidence" value="ECO:0007669"/>
    <property type="project" value="UniProtKB-UniRule"/>
</dbReference>
<dbReference type="GO" id="GO:0008270">
    <property type="term" value="F:zinc ion binding"/>
    <property type="evidence" value="ECO:0007669"/>
    <property type="project" value="UniProtKB-UniRule"/>
</dbReference>
<dbReference type="GO" id="GO:0019509">
    <property type="term" value="P:L-methionine salvage from methylthioadenosine"/>
    <property type="evidence" value="ECO:0007669"/>
    <property type="project" value="UniProtKB-UniRule"/>
</dbReference>
<dbReference type="FunFam" id="3.40.225.10:FF:000020">
    <property type="entry name" value="Methylthioribulose-1-phosphate dehydratase"/>
    <property type="match status" value="1"/>
</dbReference>
<dbReference type="Gene3D" id="3.40.225.10">
    <property type="entry name" value="Class II aldolase/adducin N-terminal domain"/>
    <property type="match status" value="1"/>
</dbReference>
<dbReference type="HAMAP" id="MF_01677">
    <property type="entry name" value="Salvage_MtnB"/>
    <property type="match status" value="1"/>
</dbReference>
<dbReference type="InterPro" id="IPR001303">
    <property type="entry name" value="Aldolase_II/adducin_N"/>
</dbReference>
<dbReference type="InterPro" id="IPR036409">
    <property type="entry name" value="Aldolase_II/adducin_N_sf"/>
</dbReference>
<dbReference type="InterPro" id="IPR017714">
    <property type="entry name" value="MethylthioRu-1-P_deHdtase_MtnB"/>
</dbReference>
<dbReference type="NCBIfam" id="TIGR03328">
    <property type="entry name" value="salvage_mtnB"/>
    <property type="match status" value="1"/>
</dbReference>
<dbReference type="PANTHER" id="PTHR10640">
    <property type="entry name" value="METHYLTHIORIBULOSE-1-PHOSPHATE DEHYDRATASE"/>
    <property type="match status" value="1"/>
</dbReference>
<dbReference type="PANTHER" id="PTHR10640:SF7">
    <property type="entry name" value="METHYLTHIORIBULOSE-1-PHOSPHATE DEHYDRATASE"/>
    <property type="match status" value="1"/>
</dbReference>
<dbReference type="Pfam" id="PF00596">
    <property type="entry name" value="Aldolase_II"/>
    <property type="match status" value="1"/>
</dbReference>
<dbReference type="SMART" id="SM01007">
    <property type="entry name" value="Aldolase_II"/>
    <property type="match status" value="1"/>
</dbReference>
<dbReference type="SUPFAM" id="SSF53639">
    <property type="entry name" value="AraD/HMP-PK domain-like"/>
    <property type="match status" value="1"/>
</dbReference>
<comment type="function">
    <text evidence="1">Catalyzes the dehydration of methylthioribulose-1-phosphate (MTRu-1-P) into 2,3-diketo-5-methylthiopentyl-1-phosphate (DK-MTP-1-P).</text>
</comment>
<comment type="catalytic activity">
    <reaction evidence="1">
        <text>5-(methylsulfanyl)-D-ribulose 1-phosphate = 5-methylsulfanyl-2,3-dioxopentyl phosphate + H2O</text>
        <dbReference type="Rhea" id="RHEA:15549"/>
        <dbReference type="ChEBI" id="CHEBI:15377"/>
        <dbReference type="ChEBI" id="CHEBI:58548"/>
        <dbReference type="ChEBI" id="CHEBI:58828"/>
        <dbReference type="EC" id="4.2.1.109"/>
    </reaction>
</comment>
<comment type="cofactor">
    <cofactor evidence="1">
        <name>Zn(2+)</name>
        <dbReference type="ChEBI" id="CHEBI:29105"/>
    </cofactor>
    <text evidence="1">Binds 1 zinc ion per subunit.</text>
</comment>
<comment type="pathway">
    <text evidence="1">Amino-acid biosynthesis; L-methionine biosynthesis via salvage pathway; L-methionine from S-methyl-5-thio-alpha-D-ribose 1-phosphate: step 2/6.</text>
</comment>
<comment type="similarity">
    <text evidence="1">Belongs to the aldolase class II family. MtnB subfamily.</text>
</comment>
<gene>
    <name evidence="1" type="primary">mtnB</name>
    <name type="ordered locus">LIC_20226</name>
</gene>
<feature type="chain" id="PRO_0000357091" description="Methylthioribulose-1-phosphate dehydratase">
    <location>
        <begin position="1"/>
        <end position="249"/>
    </location>
</feature>
<feature type="binding site" evidence="1">
    <location>
        <position position="103"/>
    </location>
    <ligand>
        <name>Zn(2+)</name>
        <dbReference type="ChEBI" id="CHEBI:29105"/>
    </ligand>
</feature>
<feature type="binding site" evidence="1">
    <location>
        <position position="105"/>
    </location>
    <ligand>
        <name>Zn(2+)</name>
        <dbReference type="ChEBI" id="CHEBI:29105"/>
    </ligand>
</feature>
<accession>Q75FG3</accession>
<organism>
    <name type="scientific">Leptospira interrogans serogroup Icterohaemorrhagiae serovar copenhageni (strain Fiocruz L1-130)</name>
    <dbReference type="NCBI Taxonomy" id="267671"/>
    <lineage>
        <taxon>Bacteria</taxon>
        <taxon>Pseudomonadati</taxon>
        <taxon>Spirochaetota</taxon>
        <taxon>Spirochaetia</taxon>
        <taxon>Leptospirales</taxon>
        <taxon>Leptospiraceae</taxon>
        <taxon>Leptospira</taxon>
    </lineage>
</organism>
<protein>
    <recommendedName>
        <fullName evidence="1">Methylthioribulose-1-phosphate dehydratase</fullName>
        <shortName evidence="1">MTRu-1-P dehydratase</shortName>
        <ecNumber evidence="1">4.2.1.109</ecNumber>
    </recommendedName>
</protein>